<reference key="1">
    <citation type="journal article" date="2001" name="Nature">
        <title>Massive gene decay in the leprosy bacillus.</title>
        <authorList>
            <person name="Cole S.T."/>
            <person name="Eiglmeier K."/>
            <person name="Parkhill J."/>
            <person name="James K.D."/>
            <person name="Thomson N.R."/>
            <person name="Wheeler P.R."/>
            <person name="Honore N."/>
            <person name="Garnier T."/>
            <person name="Churcher C.M."/>
            <person name="Harris D.E."/>
            <person name="Mungall K.L."/>
            <person name="Basham D."/>
            <person name="Brown D."/>
            <person name="Chillingworth T."/>
            <person name="Connor R."/>
            <person name="Davies R.M."/>
            <person name="Devlin K."/>
            <person name="Duthoy S."/>
            <person name="Feltwell T."/>
            <person name="Fraser A."/>
            <person name="Hamlin N."/>
            <person name="Holroyd S."/>
            <person name="Hornsby T."/>
            <person name="Jagels K."/>
            <person name="Lacroix C."/>
            <person name="Maclean J."/>
            <person name="Moule S."/>
            <person name="Murphy L.D."/>
            <person name="Oliver K."/>
            <person name="Quail M.A."/>
            <person name="Rajandream M.A."/>
            <person name="Rutherford K.M."/>
            <person name="Rutter S."/>
            <person name="Seeger K."/>
            <person name="Simon S."/>
            <person name="Simmonds M."/>
            <person name="Skelton J."/>
            <person name="Squares R."/>
            <person name="Squares S."/>
            <person name="Stevens K."/>
            <person name="Taylor K."/>
            <person name="Whitehead S."/>
            <person name="Woodward J.R."/>
            <person name="Barrell B.G."/>
        </authorList>
    </citation>
    <scope>NUCLEOTIDE SEQUENCE [LARGE SCALE GENOMIC DNA]</scope>
    <source>
        <strain>TN</strain>
    </source>
</reference>
<sequence length="407" mass="41763">MTKIVEIVNETRLLRAQGVTAPAGFQAAGITAGIKVSGAPDLALVFNEGPDYAAAGVFTRNKVKAAPVLWTQRVLSTGQLRAVILNSGGANACTGPAGFQDAHTTAEAVAAALSDWGTETGAIEVAVCSTGLIGDRLPMDKVLAGVRAIVHKMAGGVTGGDDAAHAIMTTDTVPKQVALHNRNKWTVGGMAKGAGMLAPSLATMLCVLTTDAVVEPAALDQALRRATAHTFDRLDIDGCCSTNDTVLLLASGASGITPPQADLDDAVRHACDDLCAQLQADAEGVTKRVTVTVIGAASDDDALVAARMIARDNLVKTAVFGSDPNWGRVLAAVGMAPVALDPDRLCMSFNGAAVCIDGVGTPCARDVDLSTADIDITVDLRIGDSAATIRTTDLSHTYVEENSAYSS</sequence>
<proteinExistence type="inferred from homology"/>
<protein>
    <recommendedName>
        <fullName evidence="1">Arginine biosynthesis bifunctional protein ArgJ</fullName>
    </recommendedName>
    <domain>
        <recommendedName>
            <fullName evidence="1">Glutamate N-acetyltransferase</fullName>
            <ecNumber evidence="1">2.3.1.35</ecNumber>
        </recommendedName>
        <alternativeName>
            <fullName evidence="1">Ornithine acetyltransferase</fullName>
            <shortName evidence="1">OATase</shortName>
        </alternativeName>
        <alternativeName>
            <fullName evidence="1">Ornithine transacetylase</fullName>
        </alternativeName>
    </domain>
    <domain>
        <recommendedName>
            <fullName evidence="1">Amino-acid acetyltransferase</fullName>
            <ecNumber evidence="1">2.3.1.1</ecNumber>
        </recommendedName>
        <alternativeName>
            <fullName evidence="1">N-acetylglutamate synthase</fullName>
            <shortName evidence="1">AGSase</shortName>
        </alternativeName>
    </domain>
    <component>
        <recommendedName>
            <fullName evidence="1">Arginine biosynthesis bifunctional protein ArgJ alpha chain</fullName>
        </recommendedName>
    </component>
    <component>
        <recommendedName>
            <fullName evidence="1">Arginine biosynthesis bifunctional protein ArgJ beta chain</fullName>
        </recommendedName>
    </component>
</protein>
<feature type="chain" id="PRO_0000002189" description="Arginine biosynthesis bifunctional protein ArgJ alpha chain" evidence="1">
    <location>
        <begin position="1"/>
        <end position="202"/>
    </location>
</feature>
<feature type="chain" id="PRO_0000002190" description="Arginine biosynthesis bifunctional protein ArgJ beta chain" evidence="1">
    <location>
        <begin position="203"/>
        <end position="407"/>
    </location>
</feature>
<feature type="active site" description="Nucleophile" evidence="1">
    <location>
        <position position="203"/>
    </location>
</feature>
<feature type="binding site" evidence="1">
    <location>
        <position position="169"/>
    </location>
    <ligand>
        <name>substrate</name>
    </ligand>
</feature>
<feature type="binding site" evidence="1">
    <location>
        <position position="192"/>
    </location>
    <ligand>
        <name>substrate</name>
    </ligand>
</feature>
<feature type="binding site" evidence="1">
    <location>
        <position position="203"/>
    </location>
    <ligand>
        <name>substrate</name>
    </ligand>
</feature>
<feature type="binding site" evidence="1">
    <location>
        <position position="283"/>
    </location>
    <ligand>
        <name>substrate</name>
    </ligand>
</feature>
<feature type="binding site" evidence="1">
    <location>
        <position position="402"/>
    </location>
    <ligand>
        <name>substrate</name>
    </ligand>
</feature>
<feature type="binding site" evidence="1">
    <location>
        <position position="407"/>
    </location>
    <ligand>
        <name>substrate</name>
    </ligand>
</feature>
<feature type="site" description="Involved in the stabilization of negative charge on the oxyanion by the formation of the oxyanion hole" evidence="1">
    <location>
        <position position="130"/>
    </location>
</feature>
<feature type="site" description="Involved in the stabilization of negative charge on the oxyanion by the formation of the oxyanion hole" evidence="1">
    <location>
        <position position="131"/>
    </location>
</feature>
<feature type="site" description="Cleavage; by autolysis" evidence="1">
    <location>
        <begin position="202"/>
        <end position="203"/>
    </location>
</feature>
<accession>Q9CC14</accession>
<keyword id="KW-0012">Acyltransferase</keyword>
<keyword id="KW-0028">Amino-acid biosynthesis</keyword>
<keyword id="KW-0055">Arginine biosynthesis</keyword>
<keyword id="KW-0068">Autocatalytic cleavage</keyword>
<keyword id="KW-0963">Cytoplasm</keyword>
<keyword id="KW-0511">Multifunctional enzyme</keyword>
<keyword id="KW-1185">Reference proteome</keyword>
<keyword id="KW-0808">Transferase</keyword>
<evidence type="ECO:0000255" key="1">
    <source>
        <dbReference type="HAMAP-Rule" id="MF_01106"/>
    </source>
</evidence>
<name>ARGJ_MYCLE</name>
<organism>
    <name type="scientific">Mycobacterium leprae (strain TN)</name>
    <dbReference type="NCBI Taxonomy" id="272631"/>
    <lineage>
        <taxon>Bacteria</taxon>
        <taxon>Bacillati</taxon>
        <taxon>Actinomycetota</taxon>
        <taxon>Actinomycetes</taxon>
        <taxon>Mycobacteriales</taxon>
        <taxon>Mycobacteriaceae</taxon>
        <taxon>Mycobacterium</taxon>
    </lineage>
</organism>
<dbReference type="EC" id="2.3.1.35" evidence="1"/>
<dbReference type="EC" id="2.3.1.1" evidence="1"/>
<dbReference type="EMBL" id="AL583922">
    <property type="protein sequence ID" value="CAC30358.1"/>
    <property type="molecule type" value="Genomic_DNA"/>
</dbReference>
<dbReference type="PIR" id="A87085">
    <property type="entry name" value="A87085"/>
</dbReference>
<dbReference type="RefSeq" id="NP_302000.1">
    <property type="nucleotide sequence ID" value="NC_002677.1"/>
</dbReference>
<dbReference type="RefSeq" id="WP_010908321.1">
    <property type="nucleotide sequence ID" value="NC_002677.1"/>
</dbReference>
<dbReference type="SMR" id="Q9CC14"/>
<dbReference type="STRING" id="272631.gene:17575246"/>
<dbReference type="KEGG" id="mle:ML1407"/>
<dbReference type="PATRIC" id="fig|272631.5.peg.2612"/>
<dbReference type="Leproma" id="ML1407"/>
<dbReference type="eggNOG" id="COG1364">
    <property type="taxonomic scope" value="Bacteria"/>
</dbReference>
<dbReference type="HOGENOM" id="CLU_027172_2_0_11"/>
<dbReference type="OrthoDB" id="9804242at2"/>
<dbReference type="UniPathway" id="UPA00068">
    <property type="reaction ID" value="UER00106"/>
</dbReference>
<dbReference type="UniPathway" id="UPA00068">
    <property type="reaction ID" value="UER00111"/>
</dbReference>
<dbReference type="Proteomes" id="UP000000806">
    <property type="component" value="Chromosome"/>
</dbReference>
<dbReference type="GO" id="GO:0005737">
    <property type="term" value="C:cytoplasm"/>
    <property type="evidence" value="ECO:0007669"/>
    <property type="project" value="UniProtKB-SubCell"/>
</dbReference>
<dbReference type="GO" id="GO:0004358">
    <property type="term" value="F:glutamate N-acetyltransferase activity"/>
    <property type="evidence" value="ECO:0007669"/>
    <property type="project" value="UniProtKB-UniRule"/>
</dbReference>
<dbReference type="GO" id="GO:0004042">
    <property type="term" value="F:L-glutamate N-acetyltransferase activity"/>
    <property type="evidence" value="ECO:0007669"/>
    <property type="project" value="UniProtKB-UniRule"/>
</dbReference>
<dbReference type="GO" id="GO:0006526">
    <property type="term" value="P:L-arginine biosynthetic process"/>
    <property type="evidence" value="ECO:0007669"/>
    <property type="project" value="UniProtKB-UniRule"/>
</dbReference>
<dbReference type="GO" id="GO:0006592">
    <property type="term" value="P:ornithine biosynthetic process"/>
    <property type="evidence" value="ECO:0007669"/>
    <property type="project" value="TreeGrafter"/>
</dbReference>
<dbReference type="CDD" id="cd02152">
    <property type="entry name" value="OAT"/>
    <property type="match status" value="1"/>
</dbReference>
<dbReference type="FunFam" id="3.10.20.340:FF:000005">
    <property type="entry name" value="Arginine biosynthesis bifunctional protein ArgJ"/>
    <property type="match status" value="1"/>
</dbReference>
<dbReference type="Gene3D" id="3.30.2330.10">
    <property type="entry name" value="arginine biosynthesis bifunctional protein suprefamily"/>
    <property type="match status" value="1"/>
</dbReference>
<dbReference type="Gene3D" id="3.10.20.340">
    <property type="entry name" value="ArgJ beta chain, C-terminal domain"/>
    <property type="match status" value="1"/>
</dbReference>
<dbReference type="Gene3D" id="3.60.70.12">
    <property type="entry name" value="L-amino peptidase D-ALA esterase/amidase"/>
    <property type="match status" value="1"/>
</dbReference>
<dbReference type="HAMAP" id="MF_01106">
    <property type="entry name" value="ArgJ"/>
    <property type="match status" value="1"/>
</dbReference>
<dbReference type="InterPro" id="IPR002813">
    <property type="entry name" value="Arg_biosynth_ArgJ"/>
</dbReference>
<dbReference type="InterPro" id="IPR016117">
    <property type="entry name" value="ArgJ-like_dom_sf"/>
</dbReference>
<dbReference type="InterPro" id="IPR042195">
    <property type="entry name" value="ArgJ_beta_C"/>
</dbReference>
<dbReference type="NCBIfam" id="TIGR00120">
    <property type="entry name" value="ArgJ"/>
    <property type="match status" value="1"/>
</dbReference>
<dbReference type="NCBIfam" id="NF003802">
    <property type="entry name" value="PRK05388.1"/>
    <property type="match status" value="1"/>
</dbReference>
<dbReference type="PANTHER" id="PTHR23100">
    <property type="entry name" value="ARGININE BIOSYNTHESIS BIFUNCTIONAL PROTEIN ARGJ"/>
    <property type="match status" value="1"/>
</dbReference>
<dbReference type="PANTHER" id="PTHR23100:SF0">
    <property type="entry name" value="ARGININE BIOSYNTHESIS BIFUNCTIONAL PROTEIN ARGJ, MITOCHONDRIAL"/>
    <property type="match status" value="1"/>
</dbReference>
<dbReference type="Pfam" id="PF01960">
    <property type="entry name" value="ArgJ"/>
    <property type="match status" value="1"/>
</dbReference>
<dbReference type="SUPFAM" id="SSF56266">
    <property type="entry name" value="DmpA/ArgJ-like"/>
    <property type="match status" value="1"/>
</dbReference>
<gene>
    <name evidence="1" type="primary">argJ</name>
    <name type="ordered locus">ML1407</name>
</gene>
<comment type="function">
    <text evidence="1">Catalyzes two activities which are involved in the cyclic version of arginine biosynthesis: the synthesis of N-acetylglutamate from glutamate and acetyl-CoA as the acetyl donor, and of ornithine by transacetylation between N(2)-acetylornithine and glutamate.</text>
</comment>
<comment type="catalytic activity">
    <reaction evidence="1">
        <text>N(2)-acetyl-L-ornithine + L-glutamate = N-acetyl-L-glutamate + L-ornithine</text>
        <dbReference type="Rhea" id="RHEA:15349"/>
        <dbReference type="ChEBI" id="CHEBI:29985"/>
        <dbReference type="ChEBI" id="CHEBI:44337"/>
        <dbReference type="ChEBI" id="CHEBI:46911"/>
        <dbReference type="ChEBI" id="CHEBI:57805"/>
        <dbReference type="EC" id="2.3.1.35"/>
    </reaction>
</comment>
<comment type="catalytic activity">
    <reaction evidence="1">
        <text>L-glutamate + acetyl-CoA = N-acetyl-L-glutamate + CoA + H(+)</text>
        <dbReference type="Rhea" id="RHEA:24292"/>
        <dbReference type="ChEBI" id="CHEBI:15378"/>
        <dbReference type="ChEBI" id="CHEBI:29985"/>
        <dbReference type="ChEBI" id="CHEBI:44337"/>
        <dbReference type="ChEBI" id="CHEBI:57287"/>
        <dbReference type="ChEBI" id="CHEBI:57288"/>
        <dbReference type="EC" id="2.3.1.1"/>
    </reaction>
</comment>
<comment type="pathway">
    <text evidence="1">Amino-acid biosynthesis; L-arginine biosynthesis; L-ornithine and N-acetyl-L-glutamate from L-glutamate and N(2)-acetyl-L-ornithine (cyclic): step 1/1.</text>
</comment>
<comment type="pathway">
    <text evidence="1">Amino-acid biosynthesis; L-arginine biosynthesis; N(2)-acetyl-L-ornithine from L-glutamate: step 1/4.</text>
</comment>
<comment type="subunit">
    <text evidence="1">Heterotetramer of two alpha and two beta chains.</text>
</comment>
<comment type="subcellular location">
    <subcellularLocation>
        <location evidence="1">Cytoplasm</location>
    </subcellularLocation>
</comment>
<comment type="similarity">
    <text evidence="1">Belongs to the ArgJ family.</text>
</comment>